<gene>
    <name type="primary">SER2</name>
    <name type="ordered locus">YGR208W</name>
    <name type="ORF">G7744</name>
</gene>
<name>SERB_YEAST</name>
<organism>
    <name type="scientific">Saccharomyces cerevisiae (strain ATCC 204508 / S288c)</name>
    <name type="common">Baker's yeast</name>
    <dbReference type="NCBI Taxonomy" id="559292"/>
    <lineage>
        <taxon>Eukaryota</taxon>
        <taxon>Fungi</taxon>
        <taxon>Dikarya</taxon>
        <taxon>Ascomycota</taxon>
        <taxon>Saccharomycotina</taxon>
        <taxon>Saccharomycetes</taxon>
        <taxon>Saccharomycetales</taxon>
        <taxon>Saccharomycetaceae</taxon>
        <taxon>Saccharomyces</taxon>
    </lineage>
</organism>
<reference key="1">
    <citation type="submission" date="1995-09" db="EMBL/GenBank/DDBJ databases">
        <authorList>
            <person name="Song J.M."/>
            <person name="Cheung E."/>
            <person name="Rabinowitz J.C."/>
        </authorList>
    </citation>
    <scope>NUCLEOTIDE SEQUENCE [GENOMIC DNA]</scope>
    <source>
        <strain>S288c / GRF88</strain>
    </source>
</reference>
<reference key="2">
    <citation type="journal article" date="1996" name="Yeast">
        <title>Sequencing of a 17.6 kb segment on the right arm of yeast chromosome VII reveals 12 ORFs, including CCT, ADE3 and TR-I genes, homologues of the yeast PMT and EF1G genes, of the human and bacterial electron-transferring flavoproteins (beta-chain) and of the Escherichia coli phosphoserine phosphohydrolase, and five new ORFs.</title>
        <authorList>
            <person name="Guerreiro P."/>
            <person name="Barreiros T."/>
            <person name="Soares H."/>
            <person name="Cyrne L."/>
            <person name="Maia e Silva A."/>
            <person name="Rodrigues-Pousada C."/>
        </authorList>
    </citation>
    <scope>NUCLEOTIDE SEQUENCE [GENOMIC DNA]</scope>
    <source>
        <strain>ATCC 204508 / S288c</strain>
    </source>
</reference>
<reference key="3">
    <citation type="journal article" date="1997" name="Nature">
        <title>The nucleotide sequence of Saccharomyces cerevisiae chromosome VII.</title>
        <authorList>
            <person name="Tettelin H."/>
            <person name="Agostoni-Carbone M.L."/>
            <person name="Albermann K."/>
            <person name="Albers M."/>
            <person name="Arroyo J."/>
            <person name="Backes U."/>
            <person name="Barreiros T."/>
            <person name="Bertani I."/>
            <person name="Bjourson A.J."/>
            <person name="Brueckner M."/>
            <person name="Bruschi C.V."/>
            <person name="Carignani G."/>
            <person name="Castagnoli L."/>
            <person name="Cerdan E."/>
            <person name="Clemente M.L."/>
            <person name="Coblenz A."/>
            <person name="Coglievina M."/>
            <person name="Coissac E."/>
            <person name="Defoor E."/>
            <person name="Del Bino S."/>
            <person name="Delius H."/>
            <person name="Delneri D."/>
            <person name="de Wergifosse P."/>
            <person name="Dujon B."/>
            <person name="Durand P."/>
            <person name="Entian K.-D."/>
            <person name="Eraso P."/>
            <person name="Escribano V."/>
            <person name="Fabiani L."/>
            <person name="Fartmann B."/>
            <person name="Feroli F."/>
            <person name="Feuermann M."/>
            <person name="Frontali L."/>
            <person name="Garcia-Gonzalez M."/>
            <person name="Garcia-Saez M.I."/>
            <person name="Goffeau A."/>
            <person name="Guerreiro P."/>
            <person name="Hani J."/>
            <person name="Hansen M."/>
            <person name="Hebling U."/>
            <person name="Hernandez K."/>
            <person name="Heumann K."/>
            <person name="Hilger F."/>
            <person name="Hofmann B."/>
            <person name="Indge K.J."/>
            <person name="James C.M."/>
            <person name="Klima R."/>
            <person name="Koetter P."/>
            <person name="Kramer B."/>
            <person name="Kramer W."/>
            <person name="Lauquin G."/>
            <person name="Leuther H."/>
            <person name="Louis E.J."/>
            <person name="Maillier E."/>
            <person name="Marconi A."/>
            <person name="Martegani E."/>
            <person name="Mazon M.J."/>
            <person name="Mazzoni C."/>
            <person name="McReynolds A.D.K."/>
            <person name="Melchioretto P."/>
            <person name="Mewes H.-W."/>
            <person name="Minenkova O."/>
            <person name="Mueller-Auer S."/>
            <person name="Nawrocki A."/>
            <person name="Netter P."/>
            <person name="Neu R."/>
            <person name="Nombela C."/>
            <person name="Oliver S.G."/>
            <person name="Panzeri L."/>
            <person name="Paoluzi S."/>
            <person name="Plevani P."/>
            <person name="Portetelle D."/>
            <person name="Portillo F."/>
            <person name="Potier S."/>
            <person name="Purnelle B."/>
            <person name="Rieger M."/>
            <person name="Riles L."/>
            <person name="Rinaldi T."/>
            <person name="Robben J."/>
            <person name="Rodrigues-Pousada C."/>
            <person name="Rodriguez-Belmonte E."/>
            <person name="Rodriguez-Torres A.M."/>
            <person name="Rose M."/>
            <person name="Ruzzi M."/>
            <person name="Saliola M."/>
            <person name="Sanchez-Perez M."/>
            <person name="Schaefer B."/>
            <person name="Schaefer M."/>
            <person name="Scharfe M."/>
            <person name="Schmidheini T."/>
            <person name="Schreer A."/>
            <person name="Skala J."/>
            <person name="Souciet J.-L."/>
            <person name="Steensma H.Y."/>
            <person name="Talla E."/>
            <person name="Thierry A."/>
            <person name="Vandenbol M."/>
            <person name="van der Aart Q.J.M."/>
            <person name="Van Dyck L."/>
            <person name="Vanoni M."/>
            <person name="Verhasselt P."/>
            <person name="Voet M."/>
            <person name="Volckaert G."/>
            <person name="Wambutt R."/>
            <person name="Watson M.D."/>
            <person name="Weber N."/>
            <person name="Wedler E."/>
            <person name="Wedler H."/>
            <person name="Wipfli P."/>
            <person name="Wolf K."/>
            <person name="Wright L.F."/>
            <person name="Zaccaria P."/>
            <person name="Zimmermann M."/>
            <person name="Zollner A."/>
            <person name="Kleine K."/>
        </authorList>
    </citation>
    <scope>NUCLEOTIDE SEQUENCE [LARGE SCALE GENOMIC DNA]</scope>
    <source>
        <strain>ATCC 204508 / S288c</strain>
    </source>
</reference>
<reference key="4">
    <citation type="journal article" date="2014" name="G3 (Bethesda)">
        <title>The reference genome sequence of Saccharomyces cerevisiae: Then and now.</title>
        <authorList>
            <person name="Engel S.R."/>
            <person name="Dietrich F.S."/>
            <person name="Fisk D.G."/>
            <person name="Binkley G."/>
            <person name="Balakrishnan R."/>
            <person name="Costanzo M.C."/>
            <person name="Dwight S.S."/>
            <person name="Hitz B.C."/>
            <person name="Karra K."/>
            <person name="Nash R.S."/>
            <person name="Weng S."/>
            <person name="Wong E.D."/>
            <person name="Lloyd P."/>
            <person name="Skrzypek M.S."/>
            <person name="Miyasato S.R."/>
            <person name="Simison M."/>
            <person name="Cherry J.M."/>
        </authorList>
    </citation>
    <scope>GENOME REANNOTATION</scope>
    <source>
        <strain>ATCC 204508 / S288c</strain>
    </source>
</reference>
<reference key="5">
    <citation type="journal article" date="2003" name="Nature">
        <title>Global analysis of protein expression in yeast.</title>
        <authorList>
            <person name="Ghaemmaghami S."/>
            <person name="Huh W.-K."/>
            <person name="Bower K."/>
            <person name="Howson R.W."/>
            <person name="Belle A."/>
            <person name="Dephoure N."/>
            <person name="O'Shea E.K."/>
            <person name="Weissman J.S."/>
        </authorList>
    </citation>
    <scope>LEVEL OF PROTEIN EXPRESSION [LARGE SCALE ANALYSIS]</scope>
</reference>
<proteinExistence type="evidence at protein level"/>
<evidence type="ECO:0000250" key="1"/>
<evidence type="ECO:0000269" key="2">
    <source>
    </source>
</evidence>
<evidence type="ECO:0000305" key="3"/>
<comment type="catalytic activity">
    <reaction>
        <text>O-phospho-L-serine + H2O = L-serine + phosphate</text>
        <dbReference type="Rhea" id="RHEA:21208"/>
        <dbReference type="ChEBI" id="CHEBI:15377"/>
        <dbReference type="ChEBI" id="CHEBI:33384"/>
        <dbReference type="ChEBI" id="CHEBI:43474"/>
        <dbReference type="ChEBI" id="CHEBI:57524"/>
        <dbReference type="EC" id="3.1.3.3"/>
    </reaction>
</comment>
<comment type="catalytic activity">
    <reaction>
        <text>O-phospho-D-serine + H2O = D-serine + phosphate</text>
        <dbReference type="Rhea" id="RHEA:24873"/>
        <dbReference type="ChEBI" id="CHEBI:15377"/>
        <dbReference type="ChEBI" id="CHEBI:35247"/>
        <dbReference type="ChEBI" id="CHEBI:43474"/>
        <dbReference type="ChEBI" id="CHEBI:58680"/>
        <dbReference type="EC" id="3.1.3.3"/>
    </reaction>
</comment>
<comment type="cofactor">
    <cofactor evidence="1">
        <name>Mg(2+)</name>
        <dbReference type="ChEBI" id="CHEBI:18420"/>
    </cofactor>
    <text evidence="1">Binds 1 Mg(2+) ion per subunit.</text>
</comment>
<comment type="pathway">
    <text>Amino-acid biosynthesis; L-serine biosynthesis; L-serine from 3-phospho-D-glycerate: step 3/3.</text>
</comment>
<comment type="miscellaneous">
    <text evidence="2">Present with 13800 molecules/cell in log phase SD medium.</text>
</comment>
<comment type="similarity">
    <text evidence="3">Belongs to the HAD-like hydrolase superfamily. SerB family.</text>
</comment>
<dbReference type="EC" id="3.1.3.3"/>
<dbReference type="EMBL" id="U36473">
    <property type="protein sequence ID" value="AAA79062.1"/>
    <property type="molecule type" value="Genomic_DNA"/>
</dbReference>
<dbReference type="EMBL" id="Z49133">
    <property type="protein sequence ID" value="CAA89001.1"/>
    <property type="molecule type" value="Genomic_DNA"/>
</dbReference>
<dbReference type="EMBL" id="Z72993">
    <property type="protein sequence ID" value="CAA97235.1"/>
    <property type="molecule type" value="Genomic_DNA"/>
</dbReference>
<dbReference type="EMBL" id="BK006941">
    <property type="protein sequence ID" value="DAA08302.1"/>
    <property type="molecule type" value="Genomic_DNA"/>
</dbReference>
<dbReference type="PIR" id="S53931">
    <property type="entry name" value="S53931"/>
</dbReference>
<dbReference type="RefSeq" id="NP_011724.1">
    <property type="nucleotide sequence ID" value="NM_001181337.1"/>
</dbReference>
<dbReference type="SMR" id="P42941"/>
<dbReference type="BioGRID" id="33461">
    <property type="interactions" value="288"/>
</dbReference>
<dbReference type="DIP" id="DIP-2085N"/>
<dbReference type="FunCoup" id="P42941">
    <property type="interactions" value="670"/>
</dbReference>
<dbReference type="IntAct" id="P42941">
    <property type="interactions" value="17"/>
</dbReference>
<dbReference type="STRING" id="4932.YGR208W"/>
<dbReference type="iPTMnet" id="P42941"/>
<dbReference type="PaxDb" id="4932-YGR208W"/>
<dbReference type="PeptideAtlas" id="P42941"/>
<dbReference type="EnsemblFungi" id="YGR208W_mRNA">
    <property type="protein sequence ID" value="YGR208W"/>
    <property type="gene ID" value="YGR208W"/>
</dbReference>
<dbReference type="GeneID" id="853122"/>
<dbReference type="KEGG" id="sce:YGR208W"/>
<dbReference type="AGR" id="SGD:S000003440"/>
<dbReference type="SGD" id="S000003440">
    <property type="gene designation" value="SER2"/>
</dbReference>
<dbReference type="VEuPathDB" id="FungiDB:YGR208W"/>
<dbReference type="eggNOG" id="KOG1615">
    <property type="taxonomic scope" value="Eukaryota"/>
</dbReference>
<dbReference type="GeneTree" id="ENSGT00390000003115"/>
<dbReference type="HOGENOM" id="CLU_036368_4_0_1"/>
<dbReference type="InParanoid" id="P42941"/>
<dbReference type="OMA" id="LSMFKHA"/>
<dbReference type="OrthoDB" id="27226at2759"/>
<dbReference type="BioCyc" id="YEAST:YGR208W-MONOMER"/>
<dbReference type="BRENDA" id="3.1.3.3">
    <property type="organism ID" value="984"/>
</dbReference>
<dbReference type="Reactome" id="R-SCE-977347">
    <property type="pathway name" value="Serine biosynthesis"/>
</dbReference>
<dbReference type="UniPathway" id="UPA00135">
    <property type="reaction ID" value="UER00198"/>
</dbReference>
<dbReference type="BioGRID-ORCS" id="853122">
    <property type="hits" value="1 hit in 10 CRISPR screens"/>
</dbReference>
<dbReference type="PRO" id="PR:P42941"/>
<dbReference type="Proteomes" id="UP000002311">
    <property type="component" value="Chromosome VII"/>
</dbReference>
<dbReference type="RNAct" id="P42941">
    <property type="molecule type" value="protein"/>
</dbReference>
<dbReference type="GO" id="GO:0005737">
    <property type="term" value="C:cytoplasm"/>
    <property type="evidence" value="ECO:0007005"/>
    <property type="project" value="SGD"/>
</dbReference>
<dbReference type="GO" id="GO:0005634">
    <property type="term" value="C:nucleus"/>
    <property type="evidence" value="ECO:0007005"/>
    <property type="project" value="SGD"/>
</dbReference>
<dbReference type="GO" id="GO:0036424">
    <property type="term" value="F:L-phosphoserine phosphatase activity"/>
    <property type="evidence" value="ECO:0000315"/>
    <property type="project" value="SGD"/>
</dbReference>
<dbReference type="GO" id="GO:0000287">
    <property type="term" value="F:magnesium ion binding"/>
    <property type="evidence" value="ECO:0000318"/>
    <property type="project" value="GO_Central"/>
</dbReference>
<dbReference type="GO" id="GO:0006564">
    <property type="term" value="P:L-serine biosynthetic process"/>
    <property type="evidence" value="ECO:0000315"/>
    <property type="project" value="SGD"/>
</dbReference>
<dbReference type="CDD" id="cd07500">
    <property type="entry name" value="HAD_PSP"/>
    <property type="match status" value="1"/>
</dbReference>
<dbReference type="FunFam" id="3.40.50.1000:FF:000283">
    <property type="entry name" value="Phosphoserine phosphatase"/>
    <property type="match status" value="1"/>
</dbReference>
<dbReference type="Gene3D" id="3.40.50.1000">
    <property type="entry name" value="HAD superfamily/HAD-like"/>
    <property type="match status" value="1"/>
</dbReference>
<dbReference type="InterPro" id="IPR050582">
    <property type="entry name" value="HAD-like_SerB"/>
</dbReference>
<dbReference type="InterPro" id="IPR036412">
    <property type="entry name" value="HAD-like_sf"/>
</dbReference>
<dbReference type="InterPro" id="IPR023214">
    <property type="entry name" value="HAD_sf"/>
</dbReference>
<dbReference type="InterPro" id="IPR004469">
    <property type="entry name" value="PSP"/>
</dbReference>
<dbReference type="NCBIfam" id="TIGR01488">
    <property type="entry name" value="HAD-SF-IB"/>
    <property type="match status" value="1"/>
</dbReference>
<dbReference type="NCBIfam" id="TIGR00338">
    <property type="entry name" value="serB"/>
    <property type="match status" value="1"/>
</dbReference>
<dbReference type="PANTHER" id="PTHR43344">
    <property type="entry name" value="PHOSPHOSERINE PHOSPHATASE"/>
    <property type="match status" value="1"/>
</dbReference>
<dbReference type="PANTHER" id="PTHR43344:SF2">
    <property type="entry name" value="PHOSPHOSERINE PHOSPHATASE"/>
    <property type="match status" value="1"/>
</dbReference>
<dbReference type="Pfam" id="PF00702">
    <property type="entry name" value="Hydrolase"/>
    <property type="match status" value="1"/>
</dbReference>
<dbReference type="SFLD" id="SFLDG01137">
    <property type="entry name" value="C1.6.1:_Phosphoserine_Phosphat"/>
    <property type="match status" value="1"/>
</dbReference>
<dbReference type="SFLD" id="SFLDF00029">
    <property type="entry name" value="phosphoserine_phosphatase"/>
    <property type="match status" value="1"/>
</dbReference>
<dbReference type="SUPFAM" id="SSF56784">
    <property type="entry name" value="HAD-like"/>
    <property type="match status" value="1"/>
</dbReference>
<keyword id="KW-0028">Amino-acid biosynthesis</keyword>
<keyword id="KW-0378">Hydrolase</keyword>
<keyword id="KW-0460">Magnesium</keyword>
<keyword id="KW-0479">Metal-binding</keyword>
<keyword id="KW-1185">Reference proteome</keyword>
<keyword id="KW-0718">Serine biosynthesis</keyword>
<accession>P42941</accession>
<accession>D6VUZ1</accession>
<sequence length="309" mass="34207">MSKFVITCIAHGENLPKETIDQIAKEITESSAKDVSINGTKKLSARATDIFIEVAGSIVQKDLKNKLTNVIDSHNDVDVIVSVDNEYRQAKKLFVFDMDSTLIYQEVIELIAAYAGVEEQVHEITERAMNNELDFKESLRERVKLLQGLQVDTLYDEIKQKLEVTKGVPELCKFLHKKNCKLAVLSGGFIQFAGFIKDQLGLDFCKANLLEVDTDGKLTGKTLGPIVDGQCKSETLLQLCNDYNVPVEASCMVGDGGNDLPAMATAGFGIAWNAKPKVQKAAPCKLNTKSMTDILYILGYTDDEIYNRQ</sequence>
<protein>
    <recommendedName>
        <fullName>Phosphoserine phosphatase</fullName>
        <shortName>PSP</shortName>
        <shortName>PSPase</shortName>
        <ecNumber>3.1.3.3</ecNumber>
    </recommendedName>
    <alternativeName>
        <fullName>O-phosphoserine phosphohydrolase</fullName>
    </alternativeName>
</protein>
<feature type="chain" id="PRO_0000156885" description="Phosphoserine phosphatase">
    <location>
        <begin position="1"/>
        <end position="309"/>
    </location>
</feature>
<feature type="active site" description="Nucleophile" evidence="1">
    <location>
        <position position="97"/>
    </location>
</feature>
<feature type="active site" description="Proton donor" evidence="1">
    <location>
        <position position="99"/>
    </location>
</feature>
<feature type="binding site" evidence="1">
    <location>
        <position position="97"/>
    </location>
    <ligand>
        <name>Mg(2+)</name>
        <dbReference type="ChEBI" id="CHEBI:18420"/>
    </ligand>
</feature>
<feature type="binding site" evidence="1">
    <location>
        <position position="99"/>
    </location>
    <ligand>
        <name>Mg(2+)</name>
        <dbReference type="ChEBI" id="CHEBI:18420"/>
    </ligand>
</feature>
<feature type="binding site" evidence="1">
    <location>
        <position position="106"/>
    </location>
    <ligand>
        <name>substrate</name>
    </ligand>
</feature>
<feature type="binding site" evidence="1">
    <location>
        <position position="142"/>
    </location>
    <ligand>
        <name>substrate</name>
    </ligand>
</feature>
<feature type="binding site" evidence="1">
    <location>
        <begin position="186"/>
        <end position="187"/>
    </location>
    <ligand>
        <name>substrate</name>
    </ligand>
</feature>
<feature type="binding site" evidence="1">
    <location>
        <position position="232"/>
    </location>
    <ligand>
        <name>substrate</name>
    </ligand>
</feature>
<feature type="binding site" evidence="1">
    <location>
        <position position="255"/>
    </location>
    <ligand>
        <name>Mg(2+)</name>
        <dbReference type="ChEBI" id="CHEBI:18420"/>
    </ligand>
</feature>
<feature type="binding site" evidence="1">
    <location>
        <position position="258"/>
    </location>
    <ligand>
        <name>substrate</name>
    </ligand>
</feature>